<proteinExistence type="inferred from homology"/>
<gene>
    <name evidence="1" type="primary">rpoZ</name>
    <name type="ordered locus">M28_Spy1381</name>
</gene>
<protein>
    <recommendedName>
        <fullName evidence="1">DNA-directed RNA polymerase subunit omega</fullName>
        <shortName evidence="1">RNAP omega subunit</shortName>
        <ecNumber evidence="1">2.7.7.6</ecNumber>
    </recommendedName>
    <alternativeName>
        <fullName evidence="1">RNA polymerase omega subunit</fullName>
    </alternativeName>
    <alternativeName>
        <fullName evidence="1">Transcriptase subunit omega</fullName>
    </alternativeName>
</protein>
<dbReference type="EC" id="2.7.7.6" evidence="1"/>
<dbReference type="EMBL" id="CP000056">
    <property type="protein sequence ID" value="AAX72491.1"/>
    <property type="molecule type" value="Genomic_DNA"/>
</dbReference>
<dbReference type="RefSeq" id="WP_002983650.1">
    <property type="nucleotide sequence ID" value="NC_007296.2"/>
</dbReference>
<dbReference type="SMR" id="Q48S19"/>
<dbReference type="GeneID" id="69900498"/>
<dbReference type="KEGG" id="spb:M28_Spy1381"/>
<dbReference type="HOGENOM" id="CLU_125406_0_0_9"/>
<dbReference type="GO" id="GO:0000428">
    <property type="term" value="C:DNA-directed RNA polymerase complex"/>
    <property type="evidence" value="ECO:0007669"/>
    <property type="project" value="UniProtKB-KW"/>
</dbReference>
<dbReference type="GO" id="GO:0003677">
    <property type="term" value="F:DNA binding"/>
    <property type="evidence" value="ECO:0007669"/>
    <property type="project" value="UniProtKB-UniRule"/>
</dbReference>
<dbReference type="GO" id="GO:0003899">
    <property type="term" value="F:DNA-directed RNA polymerase activity"/>
    <property type="evidence" value="ECO:0007669"/>
    <property type="project" value="UniProtKB-UniRule"/>
</dbReference>
<dbReference type="GO" id="GO:0006351">
    <property type="term" value="P:DNA-templated transcription"/>
    <property type="evidence" value="ECO:0007669"/>
    <property type="project" value="UniProtKB-UniRule"/>
</dbReference>
<dbReference type="Gene3D" id="3.90.940.10">
    <property type="match status" value="1"/>
</dbReference>
<dbReference type="HAMAP" id="MF_00366">
    <property type="entry name" value="RNApol_bact_RpoZ"/>
    <property type="match status" value="1"/>
</dbReference>
<dbReference type="InterPro" id="IPR003716">
    <property type="entry name" value="DNA-dir_RNA_pol_omega"/>
</dbReference>
<dbReference type="InterPro" id="IPR006110">
    <property type="entry name" value="Pol_omega/Rpo6/RPB6"/>
</dbReference>
<dbReference type="InterPro" id="IPR036161">
    <property type="entry name" value="RPB6/omega-like_sf"/>
</dbReference>
<dbReference type="NCBIfam" id="TIGR00690">
    <property type="entry name" value="rpoZ"/>
    <property type="match status" value="1"/>
</dbReference>
<dbReference type="PANTHER" id="PTHR34476">
    <property type="entry name" value="DNA-DIRECTED RNA POLYMERASE SUBUNIT OMEGA"/>
    <property type="match status" value="1"/>
</dbReference>
<dbReference type="PANTHER" id="PTHR34476:SF1">
    <property type="entry name" value="DNA-DIRECTED RNA POLYMERASE SUBUNIT OMEGA"/>
    <property type="match status" value="1"/>
</dbReference>
<dbReference type="Pfam" id="PF01192">
    <property type="entry name" value="RNA_pol_Rpb6"/>
    <property type="match status" value="1"/>
</dbReference>
<dbReference type="SMART" id="SM01409">
    <property type="entry name" value="RNA_pol_Rpb6"/>
    <property type="match status" value="1"/>
</dbReference>
<dbReference type="SUPFAM" id="SSF63562">
    <property type="entry name" value="RPB6/omega subunit-like"/>
    <property type="match status" value="1"/>
</dbReference>
<comment type="function">
    <text evidence="1">Promotes RNA polymerase assembly. Latches the N- and C-terminal regions of the beta' subunit thereby facilitating its interaction with the beta and alpha subunits.</text>
</comment>
<comment type="catalytic activity">
    <reaction evidence="1">
        <text>RNA(n) + a ribonucleoside 5'-triphosphate = RNA(n+1) + diphosphate</text>
        <dbReference type="Rhea" id="RHEA:21248"/>
        <dbReference type="Rhea" id="RHEA-COMP:14527"/>
        <dbReference type="Rhea" id="RHEA-COMP:17342"/>
        <dbReference type="ChEBI" id="CHEBI:33019"/>
        <dbReference type="ChEBI" id="CHEBI:61557"/>
        <dbReference type="ChEBI" id="CHEBI:140395"/>
        <dbReference type="EC" id="2.7.7.6"/>
    </reaction>
</comment>
<comment type="subunit">
    <text evidence="1">The RNAP catalytic core consists of 2 alpha, 1 beta, 1 beta' and 1 omega subunit. When a sigma factor is associated with the core the holoenzyme is formed, which can initiate transcription.</text>
</comment>
<comment type="similarity">
    <text evidence="1">Belongs to the RNA polymerase subunit omega family.</text>
</comment>
<evidence type="ECO:0000255" key="1">
    <source>
        <dbReference type="HAMAP-Rule" id="MF_00366"/>
    </source>
</evidence>
<organism>
    <name type="scientific">Streptococcus pyogenes serotype M28 (strain MGAS6180)</name>
    <dbReference type="NCBI Taxonomy" id="319701"/>
    <lineage>
        <taxon>Bacteria</taxon>
        <taxon>Bacillati</taxon>
        <taxon>Bacillota</taxon>
        <taxon>Bacilli</taxon>
        <taxon>Lactobacillales</taxon>
        <taxon>Streptococcaceae</taxon>
        <taxon>Streptococcus</taxon>
    </lineage>
</organism>
<sequence length="105" mass="11837">MMLKPSIDTLLDKVPSKYSLVILQAKRAHELEAGATPTQEFKSVKSTLQALEEIESGNVVIHPDPSAKREAVRAKIEAERLAKEEEERKIKEQIAKEKEEEGEKI</sequence>
<feature type="chain" id="PRO_0000237512" description="DNA-directed RNA polymerase subunit omega">
    <location>
        <begin position="1"/>
        <end position="105"/>
    </location>
</feature>
<keyword id="KW-0240">DNA-directed RNA polymerase</keyword>
<keyword id="KW-0548">Nucleotidyltransferase</keyword>
<keyword id="KW-0804">Transcription</keyword>
<keyword id="KW-0808">Transferase</keyword>
<name>RPOZ_STRPM</name>
<reference key="1">
    <citation type="journal article" date="2005" name="J. Infect. Dis.">
        <title>Genome sequence of a serotype M28 strain of group A Streptococcus: potential new insights into puerperal sepsis and bacterial disease specificity.</title>
        <authorList>
            <person name="Green N.M."/>
            <person name="Zhang S."/>
            <person name="Porcella S.F."/>
            <person name="Nagiec M.J."/>
            <person name="Barbian K.D."/>
            <person name="Beres S.B."/>
            <person name="Lefebvre R.B."/>
            <person name="Musser J.M."/>
        </authorList>
    </citation>
    <scope>NUCLEOTIDE SEQUENCE [LARGE SCALE GENOMIC DNA]</scope>
    <source>
        <strain>MGAS6180</strain>
    </source>
</reference>
<accession>Q48S19</accession>